<gene>
    <name type="primary">CAPG</name>
    <name type="synonym">AFCP</name>
    <name type="synonym">MCP</name>
</gene>
<keyword id="KW-0002">3D-structure</keyword>
<keyword id="KW-0007">Acetylation</keyword>
<keyword id="KW-0117">Actin capping</keyword>
<keyword id="KW-0009">Actin-binding</keyword>
<keyword id="KW-0025">Alternative splicing</keyword>
<keyword id="KW-0966">Cell projection</keyword>
<keyword id="KW-0963">Cytoplasm</keyword>
<keyword id="KW-0903">Direct protein sequencing</keyword>
<keyword id="KW-0539">Nucleus</keyword>
<keyword id="KW-0597">Phosphoprotein</keyword>
<keyword id="KW-1267">Proteomics identification</keyword>
<keyword id="KW-1185">Reference proteome</keyword>
<keyword id="KW-0677">Repeat</keyword>
<reference key="1">
    <citation type="journal article" date="1992" name="J. Biol. Chem.">
        <title>Molecular cloning of human macrophage capping protein cDNA. A unique member of the gelsolin/villin family expressed primarily in macrophages.</title>
        <authorList>
            <person name="Dabiri G.A."/>
            <person name="Young C.L."/>
            <person name="Rosenbloom J."/>
            <person name="Southwick F.S."/>
        </authorList>
    </citation>
    <scope>NUCLEOTIDE SEQUENCE [MRNA] (ISOFORM 1)</scope>
    <scope>PROTEIN SEQUENCE OF 220-260 AND 320-343</scope>
    <scope>VARIANT ARG-335</scope>
</reference>
<reference key="2">
    <citation type="submission" date="2006-07" db="EMBL/GenBank/DDBJ databases">
        <authorList>
            <person name="Suzuki Y."/>
            <person name="Sugano S."/>
            <person name="Totoki Y."/>
            <person name="Toyoda A."/>
            <person name="Takeda T."/>
            <person name="Sakaki Y."/>
            <person name="Tanaka A."/>
            <person name="Yokoyama S."/>
        </authorList>
    </citation>
    <scope>NUCLEOTIDE SEQUENCE [LARGE SCALE MRNA] (ISOFORM 2)</scope>
    <scope>VARIANT ARG-335</scope>
    <source>
        <tissue>Testis</tissue>
    </source>
</reference>
<reference key="3">
    <citation type="journal article" date="2005" name="Nature">
        <title>Generation and annotation of the DNA sequences of human chromosomes 2 and 4.</title>
        <authorList>
            <person name="Hillier L.W."/>
            <person name="Graves T.A."/>
            <person name="Fulton R.S."/>
            <person name="Fulton L.A."/>
            <person name="Pepin K.H."/>
            <person name="Minx P."/>
            <person name="Wagner-McPherson C."/>
            <person name="Layman D."/>
            <person name="Wylie K."/>
            <person name="Sekhon M."/>
            <person name="Becker M.C."/>
            <person name="Fewell G.A."/>
            <person name="Delehaunty K.D."/>
            <person name="Miner T.L."/>
            <person name="Nash W.E."/>
            <person name="Kremitzki C."/>
            <person name="Oddy L."/>
            <person name="Du H."/>
            <person name="Sun H."/>
            <person name="Bradshaw-Cordum H."/>
            <person name="Ali J."/>
            <person name="Carter J."/>
            <person name="Cordes M."/>
            <person name="Harris A."/>
            <person name="Isak A."/>
            <person name="van Brunt A."/>
            <person name="Nguyen C."/>
            <person name="Du F."/>
            <person name="Courtney L."/>
            <person name="Kalicki J."/>
            <person name="Ozersky P."/>
            <person name="Abbott S."/>
            <person name="Armstrong J."/>
            <person name="Belter E.A."/>
            <person name="Caruso L."/>
            <person name="Cedroni M."/>
            <person name="Cotton M."/>
            <person name="Davidson T."/>
            <person name="Desai A."/>
            <person name="Elliott G."/>
            <person name="Erb T."/>
            <person name="Fronick C."/>
            <person name="Gaige T."/>
            <person name="Haakenson W."/>
            <person name="Haglund K."/>
            <person name="Holmes A."/>
            <person name="Harkins R."/>
            <person name="Kim K."/>
            <person name="Kruchowski S.S."/>
            <person name="Strong C.M."/>
            <person name="Grewal N."/>
            <person name="Goyea E."/>
            <person name="Hou S."/>
            <person name="Levy A."/>
            <person name="Martinka S."/>
            <person name="Mead K."/>
            <person name="McLellan M.D."/>
            <person name="Meyer R."/>
            <person name="Randall-Maher J."/>
            <person name="Tomlinson C."/>
            <person name="Dauphin-Kohlberg S."/>
            <person name="Kozlowicz-Reilly A."/>
            <person name="Shah N."/>
            <person name="Swearengen-Shahid S."/>
            <person name="Snider J."/>
            <person name="Strong J.T."/>
            <person name="Thompson J."/>
            <person name="Yoakum M."/>
            <person name="Leonard S."/>
            <person name="Pearman C."/>
            <person name="Trani L."/>
            <person name="Radionenko M."/>
            <person name="Waligorski J.E."/>
            <person name="Wang C."/>
            <person name="Rock S.M."/>
            <person name="Tin-Wollam A.-M."/>
            <person name="Maupin R."/>
            <person name="Latreille P."/>
            <person name="Wendl M.C."/>
            <person name="Yang S.-P."/>
            <person name="Pohl C."/>
            <person name="Wallis J.W."/>
            <person name="Spieth J."/>
            <person name="Bieri T.A."/>
            <person name="Berkowicz N."/>
            <person name="Nelson J.O."/>
            <person name="Osborne J."/>
            <person name="Ding L."/>
            <person name="Meyer R."/>
            <person name="Sabo A."/>
            <person name="Shotland Y."/>
            <person name="Sinha P."/>
            <person name="Wohldmann P.E."/>
            <person name="Cook L.L."/>
            <person name="Hickenbotham M.T."/>
            <person name="Eldred J."/>
            <person name="Williams D."/>
            <person name="Jones T.A."/>
            <person name="She X."/>
            <person name="Ciccarelli F.D."/>
            <person name="Izaurralde E."/>
            <person name="Taylor J."/>
            <person name="Schmutz J."/>
            <person name="Myers R.M."/>
            <person name="Cox D.R."/>
            <person name="Huang X."/>
            <person name="McPherson J.D."/>
            <person name="Mardis E.R."/>
            <person name="Clifton S.W."/>
            <person name="Warren W.C."/>
            <person name="Chinwalla A.T."/>
            <person name="Eddy S.R."/>
            <person name="Marra M.A."/>
            <person name="Ovcharenko I."/>
            <person name="Furey T.S."/>
            <person name="Miller W."/>
            <person name="Eichler E.E."/>
            <person name="Bork P."/>
            <person name="Suyama M."/>
            <person name="Torrents D."/>
            <person name="Waterston R.H."/>
            <person name="Wilson R.K."/>
        </authorList>
    </citation>
    <scope>NUCLEOTIDE SEQUENCE [LARGE SCALE GENOMIC DNA]</scope>
    <source>
        <tissue>Bone marrow</tissue>
        <tissue>Placenta</tissue>
    </source>
</reference>
<reference key="4">
    <citation type="submission" date="2005-09" db="EMBL/GenBank/DDBJ databases">
        <authorList>
            <person name="Mural R.J."/>
            <person name="Istrail S."/>
            <person name="Sutton G.G."/>
            <person name="Florea L."/>
            <person name="Halpern A.L."/>
            <person name="Mobarry C.M."/>
            <person name="Lippert R."/>
            <person name="Walenz B."/>
            <person name="Shatkay H."/>
            <person name="Dew I."/>
            <person name="Miller J.R."/>
            <person name="Flanigan M.J."/>
            <person name="Edwards N.J."/>
            <person name="Bolanos R."/>
            <person name="Fasulo D."/>
            <person name="Halldorsson B.V."/>
            <person name="Hannenhalli S."/>
            <person name="Turner R."/>
            <person name="Yooseph S."/>
            <person name="Lu F."/>
            <person name="Nusskern D.R."/>
            <person name="Shue B.C."/>
            <person name="Zheng X.H."/>
            <person name="Zhong F."/>
            <person name="Delcher A.L."/>
            <person name="Huson D.H."/>
            <person name="Kravitz S.A."/>
            <person name="Mouchard L."/>
            <person name="Reinert K."/>
            <person name="Remington K.A."/>
            <person name="Clark A.G."/>
            <person name="Waterman M.S."/>
            <person name="Eichler E.E."/>
            <person name="Adams M.D."/>
            <person name="Hunkapiller M.W."/>
            <person name="Myers E.W."/>
            <person name="Venter J.C."/>
        </authorList>
    </citation>
    <scope>NUCLEOTIDE SEQUENCE [LARGE SCALE GENOMIC DNA]</scope>
    <scope>VARIANT ARG-335</scope>
</reference>
<reference key="5">
    <citation type="journal article" date="2004" name="Genome Res.">
        <title>The status, quality, and expansion of the NIH full-length cDNA project: the Mammalian Gene Collection (MGC).</title>
        <authorList>
            <consortium name="The MGC Project Team"/>
        </authorList>
    </citation>
    <scope>NUCLEOTIDE SEQUENCE [LARGE SCALE MRNA] (ISOFORM 1)</scope>
    <scope>VARIANT ARG-335</scope>
    <source>
        <tissue>Bone marrow</tissue>
        <tissue>Placenta</tissue>
    </source>
</reference>
<reference key="6">
    <citation type="journal article" date="1994" name="Genomics">
        <title>The human actin-regulatory protein cap G: gene structure and chromosome location.</title>
        <authorList>
            <person name="Mishra V.S."/>
            <person name="Henske E.P."/>
            <person name="Kwiatkowski D.J."/>
            <person name="Southwick F.S."/>
        </authorList>
    </citation>
    <scope>NUCLEOTIDE SEQUENCE [GENOMIC DNA] OF 1-172</scope>
    <source>
        <tissue>Placenta</tissue>
    </source>
</reference>
<reference key="7">
    <citation type="submission" date="2008-12" db="UniProtKB">
        <authorList>
            <person name="Lubec G."/>
            <person name="Chen W.-Q."/>
            <person name="Sun Y."/>
        </authorList>
    </citation>
    <scope>PROTEIN SEQUENCE OF 307-335</scope>
    <scope>IDENTIFICATION BY MASS SPECTROMETRY</scope>
    <scope>VARIANT ARG-335</scope>
    <source>
        <tissue>Fetal brain cortex</tissue>
    </source>
</reference>
<reference key="8">
    <citation type="journal article" date="2006" name="J. Proteome Res.">
        <title>Proteomic and bioinformatic characterization of the biogenesis and function of melanosomes.</title>
        <authorList>
            <person name="Chi A."/>
            <person name="Valencia J.C."/>
            <person name="Hu Z.-Z."/>
            <person name="Watabe H."/>
            <person name="Yamaguchi H."/>
            <person name="Mangini N.J."/>
            <person name="Huang H."/>
            <person name="Canfield V.A."/>
            <person name="Cheng K.C."/>
            <person name="Yang F."/>
            <person name="Abe R."/>
            <person name="Yamagishi S."/>
            <person name="Shabanowitz J."/>
            <person name="Hearing V.J."/>
            <person name="Wu C."/>
            <person name="Appella E."/>
            <person name="Hunt D.F."/>
        </authorList>
    </citation>
    <scope>SUBCELLULAR LOCATION [LARGE SCALE ANALYSIS]</scope>
    <source>
        <tissue>Melanoma</tissue>
    </source>
</reference>
<reference key="9">
    <citation type="journal article" date="2008" name="Traffic">
        <title>A new role for nuclear transport factor 2 and Ran: nuclear import of CapG.</title>
        <authorList>
            <person name="Van Impe K."/>
            <person name="Hubert T."/>
            <person name="De Corte V."/>
            <person name="Vanloo B."/>
            <person name="Boucherie C."/>
            <person name="Vandekerckhove J."/>
            <person name="Gettemans J."/>
        </authorList>
    </citation>
    <scope>INTERACTION WITH NUP62; NUTF2 AND RAN</scope>
    <scope>SUBCELLULAR LOCATION</scope>
</reference>
<reference key="10">
    <citation type="journal article" date="2009" name="Sci. Signal.">
        <title>Quantitative phosphoproteomic analysis of T cell receptor signaling reveals system-wide modulation of protein-protein interactions.</title>
        <authorList>
            <person name="Mayya V."/>
            <person name="Lundgren D.H."/>
            <person name="Hwang S.-I."/>
            <person name="Rezaul K."/>
            <person name="Wu L."/>
            <person name="Eng J.K."/>
            <person name="Rodionov V."/>
            <person name="Han D.K."/>
        </authorList>
    </citation>
    <scope>PHOSPHORYLATION [LARGE SCALE ANALYSIS] AT SER-337</scope>
    <scope>VARIANT [LARGE SCALE ANALYSIS] ARG-335</scope>
    <scope>IDENTIFICATION BY MASS SPECTROMETRY [LARGE SCALE ANALYSIS]</scope>
    <source>
        <tissue>Leukemic T-cell</tissue>
    </source>
</reference>
<reference key="11">
    <citation type="journal article" date="2010" name="Sci. Signal.">
        <title>Quantitative phosphoproteomics reveals widespread full phosphorylation site occupancy during mitosis.</title>
        <authorList>
            <person name="Olsen J.V."/>
            <person name="Vermeulen M."/>
            <person name="Santamaria A."/>
            <person name="Kumar C."/>
            <person name="Miller M.L."/>
            <person name="Jensen L.J."/>
            <person name="Gnad F."/>
            <person name="Cox J."/>
            <person name="Jensen T.S."/>
            <person name="Nigg E.A."/>
            <person name="Brunak S."/>
            <person name="Mann M."/>
        </authorList>
    </citation>
    <scope>ACETYLATION [LARGE SCALE ANALYSIS] AT MET-1</scope>
    <scope>PHOSPHORYLATION [LARGE SCALE ANALYSIS] AT SER-337</scope>
    <scope>IDENTIFICATION BY MASS SPECTROMETRY [LARGE SCALE ANALYSIS]</scope>
    <source>
        <tissue>Cervix carcinoma</tissue>
    </source>
</reference>
<reference key="12">
    <citation type="journal article" date="2014" name="J. Proteomics">
        <title>An enzyme assisted RP-RPLC approach for in-depth analysis of human liver phosphoproteome.</title>
        <authorList>
            <person name="Bian Y."/>
            <person name="Song C."/>
            <person name="Cheng K."/>
            <person name="Dong M."/>
            <person name="Wang F."/>
            <person name="Huang J."/>
            <person name="Sun D."/>
            <person name="Wang L."/>
            <person name="Ye M."/>
            <person name="Zou H."/>
        </authorList>
    </citation>
    <scope>PHOSPHORYLATION [LARGE SCALE ANALYSIS] AT SER-337</scope>
    <scope>IDENTIFICATION BY MASS SPECTROMETRY [LARGE SCALE ANALYSIS]</scope>
    <source>
        <tissue>Liver</tissue>
    </source>
</reference>
<reference key="13">
    <citation type="journal article" date="2015" name="Proteomics">
        <title>N-terminome analysis of the human mitochondrial proteome.</title>
        <authorList>
            <person name="Vaca Jacome A.S."/>
            <person name="Rabilloud T."/>
            <person name="Schaeffer-Reiss C."/>
            <person name="Rompais M."/>
            <person name="Ayoub D."/>
            <person name="Lane L."/>
            <person name="Bairoch A."/>
            <person name="Van Dorsselaer A."/>
            <person name="Carapito C."/>
        </authorList>
    </citation>
    <scope>ACETYLATION [LARGE SCALE ANALYSIS] AT MET-1</scope>
    <scope>IDENTIFICATION BY MASS SPECTROMETRY [LARGE SCALE ANALYSIS]</scope>
</reference>
<reference key="14">
    <citation type="journal article" date="1995" name="J. Biol. Chem.">
        <title>Gain-of-function mutations conferring actin-severing activity to human macrophage cap G.</title>
        <authorList>
            <person name="Southwick F.S."/>
        </authorList>
    </citation>
    <scope>X-RAY CRYSTALLOGRAPHY (2.8 ANGSTROMS) OF 11-348</scope>
</reference>
<reference key="15">
    <citation type="journal article" date="2011" name="BMC Syst. Biol.">
        <title>Initial characterization of the human central proteome.</title>
        <authorList>
            <person name="Burkard T.R."/>
            <person name="Planyavsky M."/>
            <person name="Kaupe I."/>
            <person name="Breitwieser F.P."/>
            <person name="Buerckstuemmer T."/>
            <person name="Bennett K.L."/>
            <person name="Superti-Furga G."/>
            <person name="Colinge J."/>
        </authorList>
    </citation>
    <scope>VARIANT [LARGE SCALE ANALYSIS] ARG-335</scope>
    <scope>IDENTIFICATION BY MASS SPECTROMETRY [LARGE SCALE ANALYSIS]</scope>
</reference>
<comment type="function">
    <text>Calcium-sensitive protein which reversibly blocks the barbed ends of actin filaments but does not sever preformed actin filaments. May play an important role in macrophage function. May play a role in regulating cytoplasmic and/or nuclear structures through potential interactions with actin. May bind DNA.</text>
</comment>
<comment type="subunit">
    <text evidence="6">Interacts with NUP62 (PubMed:18266911). Interacts with NUTF2 and RAN; involved in CAPG nuclear import (PubMed:18266911).</text>
</comment>
<comment type="interaction">
    <interactant intactId="EBI-4291044">
        <id>P40121</id>
    </interactant>
    <interactant intactId="EBI-747107">
        <id>Q8IUQ4</id>
        <label>SIAH1</label>
    </interactant>
    <organismsDiffer>false</organismsDiffer>
    <experiments>3</experiments>
</comment>
<comment type="interaction">
    <interactant intactId="EBI-4291044">
        <id>P40121</id>
    </interactant>
    <interactant intactId="EBI-5235340">
        <id>Q7Z699</id>
        <label>SPRED1</label>
    </interactant>
    <organismsDiffer>false</organismsDiffer>
    <experiments>3</experiments>
</comment>
<comment type="interaction">
    <interactant intactId="EBI-4291044">
        <id>P40121</id>
    </interactant>
    <interactant intactId="EBI-6658513">
        <id>Q8WWH5</id>
        <label>TRUB1</label>
    </interactant>
    <organismsDiffer>false</organismsDiffer>
    <experiments>2</experiments>
</comment>
<comment type="interaction">
    <interactant intactId="EBI-4291044">
        <id>P40121</id>
    </interactant>
    <interactant intactId="EBI-12806590">
        <id>Q86WV8</id>
        <label>TSC1</label>
    </interactant>
    <organismsDiffer>false</organismsDiffer>
    <experiments>3</experiments>
</comment>
<comment type="subcellular location">
    <subcellularLocation>
        <location evidence="5 6">Nucleus</location>
    </subcellularLocation>
    <subcellularLocation>
        <location evidence="5">Cytoplasm</location>
    </subcellularLocation>
    <subcellularLocation>
        <location evidence="5">Melanosome</location>
    </subcellularLocation>
    <subcellularLocation>
        <location evidence="1">Cell projection</location>
        <location evidence="1">Lamellipodium</location>
    </subcellularLocation>
    <subcellularLocation>
        <location evidence="1">Cell projection</location>
        <location evidence="1">Ruffle</location>
    </subcellularLocation>
    <text evidence="1">In macrophages, may be predominantly cytoplasmic. Nuclear localization was observed in fibroblasts. In macrophages, present at the membrane-cytoplasm interface. In activated macrophages, concentrated in the ruffles of the leading lamellipodia.</text>
</comment>
<comment type="alternative products">
    <event type="alternative splicing"/>
    <isoform>
        <id>P40121-1</id>
        <name>1</name>
        <sequence type="displayed"/>
    </isoform>
    <isoform>
        <id>P40121-2</id>
        <name>2</name>
        <sequence type="described" ref="VSP_045538"/>
    </isoform>
</comment>
<comment type="tissue specificity">
    <text>Macrophages and macrophage-like cells.</text>
</comment>
<comment type="PTM">
    <text>The N-terminus is blocked.</text>
</comment>
<comment type="similarity">
    <text evidence="11">Belongs to the villin/gelsolin family.</text>
</comment>
<comment type="caution">
    <text evidence="11">This protein was originally thought to be a DNA-binding protein with a helix-loop-helix domain.</text>
</comment>
<comment type="online information" name="Atlas of Genetics and Cytogenetics in Oncology and Haematology">
    <link uri="https://atlasgeneticsoncology.org/gene/44449/CAPG"/>
</comment>
<organism>
    <name type="scientific">Homo sapiens</name>
    <name type="common">Human</name>
    <dbReference type="NCBI Taxonomy" id="9606"/>
    <lineage>
        <taxon>Eukaryota</taxon>
        <taxon>Metazoa</taxon>
        <taxon>Chordata</taxon>
        <taxon>Craniata</taxon>
        <taxon>Vertebrata</taxon>
        <taxon>Euteleostomi</taxon>
        <taxon>Mammalia</taxon>
        <taxon>Eutheria</taxon>
        <taxon>Euarchontoglires</taxon>
        <taxon>Primates</taxon>
        <taxon>Haplorrhini</taxon>
        <taxon>Catarrhini</taxon>
        <taxon>Hominidae</taxon>
        <taxon>Homo</taxon>
    </lineage>
</organism>
<dbReference type="EMBL" id="M94345">
    <property type="protein sequence ID" value="AAA59570.1"/>
    <property type="molecule type" value="mRNA"/>
</dbReference>
<dbReference type="EMBL" id="AK225374">
    <property type="status" value="NOT_ANNOTATED_CDS"/>
    <property type="molecule type" value="mRNA"/>
</dbReference>
<dbReference type="EMBL" id="AC062037">
    <property type="protein sequence ID" value="AAY24128.1"/>
    <property type="molecule type" value="Genomic_DNA"/>
</dbReference>
<dbReference type="EMBL" id="CH471053">
    <property type="protein sequence ID" value="EAW99517.1"/>
    <property type="molecule type" value="Genomic_DNA"/>
</dbReference>
<dbReference type="EMBL" id="CH471053">
    <property type="protein sequence ID" value="EAW99518.1"/>
    <property type="molecule type" value="Genomic_DNA"/>
</dbReference>
<dbReference type="EMBL" id="CH471053">
    <property type="protein sequence ID" value="EAW99519.1"/>
    <property type="molecule type" value="Genomic_DNA"/>
</dbReference>
<dbReference type="EMBL" id="CH471053">
    <property type="protein sequence ID" value="EAW99520.1"/>
    <property type="molecule type" value="Genomic_DNA"/>
</dbReference>
<dbReference type="EMBL" id="BC000728">
    <property type="protein sequence ID" value="AAH00728.1"/>
    <property type="molecule type" value="mRNA"/>
</dbReference>
<dbReference type="EMBL" id="BC014549">
    <property type="protein sequence ID" value="AAH14549.1"/>
    <property type="molecule type" value="mRNA"/>
</dbReference>
<dbReference type="EMBL" id="U12026">
    <property type="protein sequence ID" value="AAA92670.1"/>
    <property type="molecule type" value="Genomic_DNA"/>
</dbReference>
<dbReference type="CCDS" id="CCDS1974.1">
    <molecule id="P40121-1"/>
</dbReference>
<dbReference type="CCDS" id="CCDS58715.1">
    <molecule id="P40121-2"/>
</dbReference>
<dbReference type="PIR" id="A43358">
    <property type="entry name" value="A43358"/>
</dbReference>
<dbReference type="RefSeq" id="NP_001243068.1">
    <molecule id="P40121-1"/>
    <property type="nucleotide sequence ID" value="NM_001256139.2"/>
</dbReference>
<dbReference type="RefSeq" id="NP_001243069.1">
    <molecule id="P40121-2"/>
    <property type="nucleotide sequence ID" value="NM_001256140.2"/>
</dbReference>
<dbReference type="RefSeq" id="NP_001307661.1">
    <molecule id="P40121-1"/>
    <property type="nucleotide sequence ID" value="NM_001320732.2"/>
</dbReference>
<dbReference type="RefSeq" id="NP_001307662.1">
    <molecule id="P40121-1"/>
    <property type="nucleotide sequence ID" value="NM_001320733.2"/>
</dbReference>
<dbReference type="RefSeq" id="NP_001738.2">
    <molecule id="P40121-1"/>
    <property type="nucleotide sequence ID" value="NM_001747.4"/>
</dbReference>
<dbReference type="RefSeq" id="XP_011531424.1">
    <molecule id="P40121-1"/>
    <property type="nucleotide sequence ID" value="XM_011533122.2"/>
</dbReference>
<dbReference type="RefSeq" id="XP_011531425.1">
    <molecule id="P40121-1"/>
    <property type="nucleotide sequence ID" value="XM_011533123.2"/>
</dbReference>
<dbReference type="RefSeq" id="XP_047301909.1">
    <molecule id="P40121-1"/>
    <property type="nucleotide sequence ID" value="XM_047445953.1"/>
</dbReference>
<dbReference type="RefSeq" id="XP_047301910.1">
    <molecule id="P40121-1"/>
    <property type="nucleotide sequence ID" value="XM_047445954.1"/>
</dbReference>
<dbReference type="PDB" id="1J72">
    <property type="method" value="X-ray"/>
    <property type="resolution" value="2.50 A"/>
    <property type="chains" value="A=1-348"/>
</dbReference>
<dbReference type="PDB" id="1JHW">
    <property type="method" value="X-ray"/>
    <property type="resolution" value="2.80 A"/>
    <property type="chains" value="A=1-348"/>
</dbReference>
<dbReference type="PDBsum" id="1J72"/>
<dbReference type="PDBsum" id="1JHW"/>
<dbReference type="SMR" id="P40121"/>
<dbReference type="BioGRID" id="107272">
    <property type="interactions" value="80"/>
</dbReference>
<dbReference type="CORUM" id="P40121"/>
<dbReference type="DIP" id="DIP-61547N"/>
<dbReference type="FunCoup" id="P40121">
    <property type="interactions" value="339"/>
</dbReference>
<dbReference type="IntAct" id="P40121">
    <property type="interactions" value="37"/>
</dbReference>
<dbReference type="MINT" id="P40121"/>
<dbReference type="STRING" id="9606.ENSP00000263867"/>
<dbReference type="GlyGen" id="P40121">
    <property type="glycosylation" value="2 sites, 1 O-linked glycan (2 sites)"/>
</dbReference>
<dbReference type="iPTMnet" id="P40121"/>
<dbReference type="MetOSite" id="P40121"/>
<dbReference type="PhosphoSitePlus" id="P40121"/>
<dbReference type="SwissPalm" id="P40121"/>
<dbReference type="BioMuta" id="CAPG"/>
<dbReference type="DMDM" id="313104088"/>
<dbReference type="REPRODUCTION-2DPAGE" id="IPI00027341"/>
<dbReference type="CPTAC" id="CPTAC-327"/>
<dbReference type="CPTAC" id="CPTAC-328"/>
<dbReference type="jPOST" id="P40121"/>
<dbReference type="MassIVE" id="P40121"/>
<dbReference type="PaxDb" id="9606-ENSP00000263867"/>
<dbReference type="PeptideAtlas" id="P40121"/>
<dbReference type="PRIDE" id="P40121"/>
<dbReference type="ProteomicsDB" id="55333">
    <molecule id="P40121-1"/>
</dbReference>
<dbReference type="ProteomicsDB" id="7432"/>
<dbReference type="Pumba" id="P40121"/>
<dbReference type="TopDownProteomics" id="P40121-1">
    <molecule id="P40121-1"/>
</dbReference>
<dbReference type="Antibodypedia" id="16906">
    <property type="antibodies" value="383 antibodies from 35 providers"/>
</dbReference>
<dbReference type="DNASU" id="822"/>
<dbReference type="Ensembl" id="ENST00000263867.9">
    <molecule id="P40121-1"/>
    <property type="protein sequence ID" value="ENSP00000263867.4"/>
    <property type="gene ID" value="ENSG00000042493.16"/>
</dbReference>
<dbReference type="Ensembl" id="ENST00000409670.5">
    <molecule id="P40121-1"/>
    <property type="protein sequence ID" value="ENSP00000386315.1"/>
    <property type="gene ID" value="ENSG00000042493.16"/>
</dbReference>
<dbReference type="Ensembl" id="ENST00000409724.5">
    <molecule id="P40121-1"/>
    <property type="protein sequence ID" value="ENSP00000386965.1"/>
    <property type="gene ID" value="ENSG00000042493.16"/>
</dbReference>
<dbReference type="Ensembl" id="ENST00000409921.5">
    <molecule id="P40121-2"/>
    <property type="protein sequence ID" value="ENSP00000387063.1"/>
    <property type="gene ID" value="ENSG00000042493.16"/>
</dbReference>
<dbReference type="GeneID" id="822"/>
<dbReference type="KEGG" id="hsa:822"/>
<dbReference type="MANE-Select" id="ENST00000263867.9">
    <property type="protein sequence ID" value="ENSP00000263867.4"/>
    <property type="RefSeq nucleotide sequence ID" value="NM_001747.4"/>
    <property type="RefSeq protein sequence ID" value="NP_001738.2"/>
</dbReference>
<dbReference type="UCSC" id="uc002spm.3">
    <molecule id="P40121-1"/>
    <property type="organism name" value="human"/>
</dbReference>
<dbReference type="AGR" id="HGNC:1474"/>
<dbReference type="CTD" id="822"/>
<dbReference type="DisGeNET" id="822"/>
<dbReference type="GeneCards" id="CAPG"/>
<dbReference type="HGNC" id="HGNC:1474">
    <property type="gene designation" value="CAPG"/>
</dbReference>
<dbReference type="HPA" id="ENSG00000042493">
    <property type="expression patterns" value="Low tissue specificity"/>
</dbReference>
<dbReference type="MIM" id="153615">
    <property type="type" value="gene"/>
</dbReference>
<dbReference type="neXtProt" id="NX_P40121"/>
<dbReference type="OpenTargets" id="ENSG00000042493"/>
<dbReference type="PharmGKB" id="PA26056"/>
<dbReference type="VEuPathDB" id="HostDB:ENSG00000042493"/>
<dbReference type="eggNOG" id="KOG0443">
    <property type="taxonomic scope" value="Eukaryota"/>
</dbReference>
<dbReference type="GeneTree" id="ENSGT00940000159305"/>
<dbReference type="HOGENOM" id="CLU_002568_0_0_1"/>
<dbReference type="InParanoid" id="P40121"/>
<dbReference type="OMA" id="HDMTLAK"/>
<dbReference type="OrthoDB" id="6375767at2759"/>
<dbReference type="PAN-GO" id="P40121">
    <property type="GO annotations" value="10 GO annotations based on evolutionary models"/>
</dbReference>
<dbReference type="PhylomeDB" id="P40121"/>
<dbReference type="TreeFam" id="TF313468"/>
<dbReference type="PathwayCommons" id="P40121"/>
<dbReference type="SignaLink" id="P40121"/>
<dbReference type="BioGRID-ORCS" id="822">
    <property type="hits" value="22 hits in 1162 CRISPR screens"/>
</dbReference>
<dbReference type="CD-CODE" id="8C2F96ED">
    <property type="entry name" value="Centrosome"/>
</dbReference>
<dbReference type="CD-CODE" id="FB4E32DD">
    <property type="entry name" value="Presynaptic clusters and postsynaptic densities"/>
</dbReference>
<dbReference type="ChiTaRS" id="CAPG">
    <property type="organism name" value="human"/>
</dbReference>
<dbReference type="EvolutionaryTrace" id="P40121"/>
<dbReference type="GeneWiki" id="CAPG"/>
<dbReference type="GenomeRNAi" id="822"/>
<dbReference type="Pharos" id="P40121">
    <property type="development level" value="Tbio"/>
</dbReference>
<dbReference type="PRO" id="PR:P40121"/>
<dbReference type="Proteomes" id="UP000005640">
    <property type="component" value="Chromosome 2"/>
</dbReference>
<dbReference type="RNAct" id="P40121">
    <property type="molecule type" value="protein"/>
</dbReference>
<dbReference type="Bgee" id="ENSG00000042493">
    <property type="expression patterns" value="Expressed in monocyte and 173 other cell types or tissues"/>
</dbReference>
<dbReference type="ExpressionAtlas" id="P40121">
    <property type="expression patterns" value="baseline and differential"/>
</dbReference>
<dbReference type="GO" id="GO:0015629">
    <property type="term" value="C:actin cytoskeleton"/>
    <property type="evidence" value="ECO:0000318"/>
    <property type="project" value="GO_Central"/>
</dbReference>
<dbReference type="GO" id="GO:0005814">
    <property type="term" value="C:centriole"/>
    <property type="evidence" value="ECO:0000314"/>
    <property type="project" value="UniProtKB"/>
</dbReference>
<dbReference type="GO" id="GO:0005694">
    <property type="term" value="C:chromosome"/>
    <property type="evidence" value="ECO:0000314"/>
    <property type="project" value="HPA"/>
</dbReference>
<dbReference type="GO" id="GO:0005737">
    <property type="term" value="C:cytoplasm"/>
    <property type="evidence" value="ECO:0000314"/>
    <property type="project" value="UniProtKB"/>
</dbReference>
<dbReference type="GO" id="GO:0070062">
    <property type="term" value="C:extracellular exosome"/>
    <property type="evidence" value="ECO:0007005"/>
    <property type="project" value="UniProtKB"/>
</dbReference>
<dbReference type="GO" id="GO:0008290">
    <property type="term" value="C:F-actin capping protein complex"/>
    <property type="evidence" value="ECO:0000304"/>
    <property type="project" value="ProtInc"/>
</dbReference>
<dbReference type="GO" id="GO:0090543">
    <property type="term" value="C:Flemming body"/>
    <property type="evidence" value="ECO:0000314"/>
    <property type="project" value="UniProtKB"/>
</dbReference>
<dbReference type="GO" id="GO:0043231">
    <property type="term" value="C:intracellular membrane-bounded organelle"/>
    <property type="evidence" value="ECO:0000314"/>
    <property type="project" value="HPA"/>
</dbReference>
<dbReference type="GO" id="GO:0030027">
    <property type="term" value="C:lamellipodium"/>
    <property type="evidence" value="ECO:0007669"/>
    <property type="project" value="UniProtKB-SubCell"/>
</dbReference>
<dbReference type="GO" id="GO:0042470">
    <property type="term" value="C:melanosome"/>
    <property type="evidence" value="ECO:0007669"/>
    <property type="project" value="UniProtKB-SubCell"/>
</dbReference>
<dbReference type="GO" id="GO:0072686">
    <property type="term" value="C:mitotic spindle"/>
    <property type="evidence" value="ECO:0000314"/>
    <property type="project" value="UniProtKB"/>
</dbReference>
<dbReference type="GO" id="GO:0005730">
    <property type="term" value="C:nucleolus"/>
    <property type="evidence" value="ECO:0000314"/>
    <property type="project" value="UniProtKB"/>
</dbReference>
<dbReference type="GO" id="GO:0005654">
    <property type="term" value="C:nucleoplasm"/>
    <property type="evidence" value="ECO:0000314"/>
    <property type="project" value="HPA"/>
</dbReference>
<dbReference type="GO" id="GO:0005634">
    <property type="term" value="C:nucleus"/>
    <property type="evidence" value="ECO:0000314"/>
    <property type="project" value="UniProtKB"/>
</dbReference>
<dbReference type="GO" id="GO:0001726">
    <property type="term" value="C:ruffle"/>
    <property type="evidence" value="ECO:0007669"/>
    <property type="project" value="UniProtKB-SubCell"/>
</dbReference>
<dbReference type="GO" id="GO:0051015">
    <property type="term" value="F:actin filament binding"/>
    <property type="evidence" value="ECO:0000318"/>
    <property type="project" value="GO_Central"/>
</dbReference>
<dbReference type="GO" id="GO:0045296">
    <property type="term" value="F:cadherin binding"/>
    <property type="evidence" value="ECO:0007005"/>
    <property type="project" value="BHF-UCL"/>
</dbReference>
<dbReference type="GO" id="GO:0005546">
    <property type="term" value="F:phosphatidylinositol-4,5-bisphosphate binding"/>
    <property type="evidence" value="ECO:0000318"/>
    <property type="project" value="GO_Central"/>
</dbReference>
<dbReference type="GO" id="GO:0019904">
    <property type="term" value="F:protein domain specific binding"/>
    <property type="evidence" value="ECO:0000353"/>
    <property type="project" value="UniProtKB"/>
</dbReference>
<dbReference type="GO" id="GO:0044877">
    <property type="term" value="F:protein-containing complex binding"/>
    <property type="evidence" value="ECO:0000314"/>
    <property type="project" value="UniProtKB"/>
</dbReference>
<dbReference type="GO" id="GO:0051014">
    <property type="term" value="P:actin filament severing"/>
    <property type="evidence" value="ECO:0000318"/>
    <property type="project" value="GO_Central"/>
</dbReference>
<dbReference type="GO" id="GO:0008154">
    <property type="term" value="P:actin polymerization or depolymerization"/>
    <property type="evidence" value="ECO:0000318"/>
    <property type="project" value="GO_Central"/>
</dbReference>
<dbReference type="GO" id="GO:0051016">
    <property type="term" value="P:barbed-end actin filament capping"/>
    <property type="evidence" value="ECO:0000318"/>
    <property type="project" value="GO_Central"/>
</dbReference>
<dbReference type="GO" id="GO:0030031">
    <property type="term" value="P:cell projection assembly"/>
    <property type="evidence" value="ECO:0000318"/>
    <property type="project" value="GO_Central"/>
</dbReference>
<dbReference type="GO" id="GO:0007417">
    <property type="term" value="P:central nervous system development"/>
    <property type="evidence" value="ECO:0000318"/>
    <property type="project" value="GO_Central"/>
</dbReference>
<dbReference type="GO" id="GO:0065003">
    <property type="term" value="P:protein-containing complex assembly"/>
    <property type="evidence" value="ECO:0000303"/>
    <property type="project" value="ProtInc"/>
</dbReference>
<dbReference type="CDD" id="cd11290">
    <property type="entry name" value="gelsolin_S1_like"/>
    <property type="match status" value="1"/>
</dbReference>
<dbReference type="CDD" id="cd11289">
    <property type="entry name" value="gelsolin_S2_like"/>
    <property type="match status" value="1"/>
</dbReference>
<dbReference type="CDD" id="cd11292">
    <property type="entry name" value="gelsolin_S3_like"/>
    <property type="match status" value="1"/>
</dbReference>
<dbReference type="FunFam" id="3.40.20.10:FF:000078">
    <property type="entry name" value="Macrophage-capping protein"/>
    <property type="match status" value="1"/>
</dbReference>
<dbReference type="FunFam" id="3.40.20.10:FF:000040">
    <property type="entry name" value="macrophage-capping protein-like isoform X1"/>
    <property type="match status" value="1"/>
</dbReference>
<dbReference type="FunFam" id="3.40.20.10:FF:000037">
    <property type="entry name" value="macrophage-capping protein-like isoform X2"/>
    <property type="match status" value="1"/>
</dbReference>
<dbReference type="Gene3D" id="3.40.20.10">
    <property type="entry name" value="Severin"/>
    <property type="match status" value="3"/>
</dbReference>
<dbReference type="InterPro" id="IPR029006">
    <property type="entry name" value="ADF-H/Gelsolin-like_dom_sf"/>
</dbReference>
<dbReference type="InterPro" id="IPR007123">
    <property type="entry name" value="Gelsolin-like_dom"/>
</dbReference>
<dbReference type="InterPro" id="IPR007122">
    <property type="entry name" value="Villin/Gelsolin"/>
</dbReference>
<dbReference type="PANTHER" id="PTHR11977:SF127">
    <property type="entry name" value="MACROPHAGE-CAPPING PROTEIN"/>
    <property type="match status" value="1"/>
</dbReference>
<dbReference type="PANTHER" id="PTHR11977">
    <property type="entry name" value="VILLIN"/>
    <property type="match status" value="1"/>
</dbReference>
<dbReference type="Pfam" id="PF00626">
    <property type="entry name" value="Gelsolin"/>
    <property type="match status" value="3"/>
</dbReference>
<dbReference type="PRINTS" id="PR00597">
    <property type="entry name" value="GELSOLIN"/>
</dbReference>
<dbReference type="SMART" id="SM00262">
    <property type="entry name" value="GEL"/>
    <property type="match status" value="3"/>
</dbReference>
<dbReference type="SUPFAM" id="SSF55753">
    <property type="entry name" value="Actin depolymerizing proteins"/>
    <property type="match status" value="3"/>
</dbReference>
<sequence>MYTAIPQSGSPFPGSVQDPGLHVWRVEKLKPVPVAQENQGVFFSGDSYLVLHNGPEEVSHLHLWIGQQSSRDEQGACAVLAVHLNTLLGERPVQHREVQGNESDLFMSYFPRGLKYQEGGVESAFHKTSTGAPAAIKKLYQVKGKKNIRATERALNWDSFNTGDCFILDLGQNIFAWCGGKSNILERNKARDLALAIRDSERQGKAQVEIVTDGEEPAEMIQVLGPKPALKEGNPEEDLTADKANAQAAALYKVSDATGQMNLTKVADSSPFALELLISDDCFVLDNGLCGKIYIWKGRKANEKERQAALQVAEGFISRMQYAPNTQVEILPQGHESPIFKQFFKDWK</sequence>
<protein>
    <recommendedName>
        <fullName>Macrophage-capping protein</fullName>
    </recommendedName>
    <alternativeName>
        <fullName>Actin regulatory protein CAP-G</fullName>
    </alternativeName>
</protein>
<evidence type="ECO:0000250" key="1">
    <source>
        <dbReference type="UniProtKB" id="P24452"/>
    </source>
</evidence>
<evidence type="ECO:0000255" key="2"/>
<evidence type="ECO:0000269" key="3">
    <source>
    </source>
</evidence>
<evidence type="ECO:0000269" key="4">
    <source>
    </source>
</evidence>
<evidence type="ECO:0000269" key="5">
    <source>
    </source>
</evidence>
<evidence type="ECO:0000269" key="6">
    <source>
    </source>
</evidence>
<evidence type="ECO:0000269" key="7">
    <source ref="2"/>
</evidence>
<evidence type="ECO:0000269" key="8">
    <source ref="4"/>
</evidence>
<evidence type="ECO:0000269" key="9">
    <source ref="7"/>
</evidence>
<evidence type="ECO:0000303" key="10">
    <source ref="2"/>
</evidence>
<evidence type="ECO:0000305" key="11"/>
<evidence type="ECO:0007744" key="12">
    <source>
    </source>
</evidence>
<evidence type="ECO:0007744" key="13">
    <source>
    </source>
</evidence>
<evidence type="ECO:0007744" key="14">
    <source>
    </source>
</evidence>
<evidence type="ECO:0007744" key="15">
    <source>
    </source>
</evidence>
<evidence type="ECO:0007744" key="16">
    <source>
    </source>
</evidence>
<evidence type="ECO:0007829" key="17">
    <source>
        <dbReference type="PDB" id="1J72"/>
    </source>
</evidence>
<evidence type="ECO:0007829" key="18">
    <source>
        <dbReference type="PDB" id="1JHW"/>
    </source>
</evidence>
<feature type="chain" id="PRO_0000218753" description="Macrophage-capping protein">
    <location>
        <begin position="1"/>
        <end position="348"/>
    </location>
</feature>
<feature type="repeat" description="Gelsolin-like 1">
    <location>
        <begin position="27"/>
        <end position="75"/>
    </location>
</feature>
<feature type="repeat" description="Gelsolin-like 2">
    <location>
        <begin position="148"/>
        <end position="188"/>
    </location>
</feature>
<feature type="repeat" description="Gelsolin-like 3">
    <location>
        <begin position="261"/>
        <end position="307"/>
    </location>
</feature>
<feature type="short sequence motif" description="Nuclear localization signal" evidence="2">
    <location>
        <begin position="137"/>
        <end position="146"/>
    </location>
</feature>
<feature type="modified residue" description="N-acetylmethionine" evidence="13 16">
    <location>
        <position position="1"/>
    </location>
</feature>
<feature type="modified residue" description="Phosphoserine" evidence="12 13 15">
    <location>
        <position position="337"/>
    </location>
</feature>
<feature type="splice variant" id="VSP_045538" description="In isoform 2." evidence="10">
    <location>
        <begin position="207"/>
        <end position="221"/>
    </location>
</feature>
<feature type="sequence variant" id="VAR_047776" description="In dbSNP:rs2229668.">
    <original>V</original>
    <variation>I</variation>
    <location>
        <position position="41"/>
    </location>
</feature>
<feature type="sequence variant" id="VAR_047777" description="In dbSNP:rs11539103.">
    <original>R</original>
    <variation>W</variation>
    <location>
        <position position="198"/>
    </location>
</feature>
<feature type="sequence variant" id="VAR_047778" description="In dbSNP:rs6886." evidence="3 4 7 8 9 12 14">
    <original>H</original>
    <variation>R</variation>
    <location>
        <position position="335"/>
    </location>
</feature>
<feature type="strand" evidence="17">
    <location>
        <begin position="17"/>
        <end position="26"/>
    </location>
</feature>
<feature type="strand" evidence="17">
    <location>
        <begin position="28"/>
        <end position="33"/>
    </location>
</feature>
<feature type="turn" evidence="17">
    <location>
        <begin position="36"/>
        <end position="40"/>
    </location>
</feature>
<feature type="strand" evidence="17">
    <location>
        <begin position="41"/>
        <end position="43"/>
    </location>
</feature>
<feature type="strand" evidence="17">
    <location>
        <begin position="46"/>
        <end position="53"/>
    </location>
</feature>
<feature type="strand" evidence="17">
    <location>
        <begin position="55"/>
        <end position="57"/>
    </location>
</feature>
<feature type="strand" evidence="17">
    <location>
        <begin position="59"/>
        <end position="65"/>
    </location>
</feature>
<feature type="helix" evidence="17">
    <location>
        <begin position="71"/>
        <end position="87"/>
    </location>
</feature>
<feature type="turn" evidence="17">
    <location>
        <begin position="88"/>
        <end position="90"/>
    </location>
</feature>
<feature type="strand" evidence="17">
    <location>
        <begin position="92"/>
        <end position="98"/>
    </location>
</feature>
<feature type="helix" evidence="17">
    <location>
        <begin position="104"/>
        <end position="107"/>
    </location>
</feature>
<feature type="strand" evidence="17">
    <location>
        <begin position="115"/>
        <end position="117"/>
    </location>
</feature>
<feature type="strand" evidence="17">
    <location>
        <begin position="135"/>
        <end position="143"/>
    </location>
</feature>
<feature type="strand" evidence="17">
    <location>
        <begin position="145"/>
        <end position="147"/>
    </location>
</feature>
<feature type="strand" evidence="17">
    <location>
        <begin position="149"/>
        <end position="153"/>
    </location>
</feature>
<feature type="helix" evidence="17">
    <location>
        <begin position="157"/>
        <end position="159"/>
    </location>
</feature>
<feature type="strand" evidence="17">
    <location>
        <begin position="164"/>
        <end position="170"/>
    </location>
</feature>
<feature type="strand" evidence="17">
    <location>
        <begin position="173"/>
        <end position="178"/>
    </location>
</feature>
<feature type="helix" evidence="17">
    <location>
        <begin position="184"/>
        <end position="198"/>
    </location>
</feature>
<feature type="turn" evidence="18">
    <location>
        <begin position="200"/>
        <end position="204"/>
    </location>
</feature>
<feature type="strand" evidence="17">
    <location>
        <begin position="207"/>
        <end position="212"/>
    </location>
</feature>
<feature type="helix" evidence="17">
    <location>
        <begin position="218"/>
        <end position="224"/>
    </location>
</feature>
<feature type="strand" evidence="17">
    <location>
        <begin position="242"/>
        <end position="246"/>
    </location>
</feature>
<feature type="strand" evidence="17">
    <location>
        <begin position="250"/>
        <end position="255"/>
    </location>
</feature>
<feature type="strand" evidence="17">
    <location>
        <begin position="262"/>
        <end position="267"/>
    </location>
</feature>
<feature type="strand" evidence="17">
    <location>
        <begin position="269"/>
        <end position="272"/>
    </location>
</feature>
<feature type="helix" evidence="17">
    <location>
        <begin position="274"/>
        <end position="276"/>
    </location>
</feature>
<feature type="strand" evidence="17">
    <location>
        <begin position="281"/>
        <end position="286"/>
    </location>
</feature>
<feature type="helix" evidence="17">
    <location>
        <begin position="288"/>
        <end position="290"/>
    </location>
</feature>
<feature type="strand" evidence="17">
    <location>
        <begin position="291"/>
        <end position="297"/>
    </location>
</feature>
<feature type="helix" evidence="17">
    <location>
        <begin position="303"/>
        <end position="320"/>
    </location>
</feature>
<feature type="strand" evidence="17">
    <location>
        <begin position="327"/>
        <end position="332"/>
    </location>
</feature>
<feature type="turn" evidence="17">
    <location>
        <begin position="338"/>
        <end position="340"/>
    </location>
</feature>
<feature type="strand" evidence="18">
    <location>
        <begin position="343"/>
        <end position="345"/>
    </location>
</feature>
<proteinExistence type="evidence at protein level"/>
<name>CAPG_HUMAN</name>
<accession>P40121</accession>
<accession>B8ZZS7</accession>
<accession>D6W5K8</accession>
<accession>Q53SA7</accession>